<evidence type="ECO:0000255" key="1">
    <source>
        <dbReference type="HAMAP-Rule" id="MF_01007"/>
    </source>
</evidence>
<evidence type="ECO:0000256" key="2">
    <source>
        <dbReference type="SAM" id="MobiDB-lite"/>
    </source>
</evidence>
<feature type="chain" id="PRO_0000386931" description="Ribosomal RNA small subunit methyltransferase H">
    <location>
        <begin position="1"/>
        <end position="342"/>
    </location>
</feature>
<feature type="region of interest" description="Disordered" evidence="2">
    <location>
        <begin position="322"/>
        <end position="342"/>
    </location>
</feature>
<feature type="binding site" evidence="1">
    <location>
        <begin position="43"/>
        <end position="45"/>
    </location>
    <ligand>
        <name>S-adenosyl-L-methionine</name>
        <dbReference type="ChEBI" id="CHEBI:59789"/>
    </ligand>
</feature>
<feature type="binding site" evidence="1">
    <location>
        <position position="61"/>
    </location>
    <ligand>
        <name>S-adenosyl-L-methionine</name>
        <dbReference type="ChEBI" id="CHEBI:59789"/>
    </ligand>
</feature>
<feature type="binding site" evidence="1">
    <location>
        <position position="87"/>
    </location>
    <ligand>
        <name>S-adenosyl-L-methionine</name>
        <dbReference type="ChEBI" id="CHEBI:59789"/>
    </ligand>
</feature>
<feature type="binding site" evidence="1">
    <location>
        <position position="108"/>
    </location>
    <ligand>
        <name>S-adenosyl-L-methionine</name>
        <dbReference type="ChEBI" id="CHEBI:59789"/>
    </ligand>
</feature>
<feature type="binding site" evidence="1">
    <location>
        <position position="115"/>
    </location>
    <ligand>
        <name>S-adenosyl-L-methionine</name>
        <dbReference type="ChEBI" id="CHEBI:59789"/>
    </ligand>
</feature>
<reference key="1">
    <citation type="journal article" date="2006" name="J. Bacteriol.">
        <title>Comparative genomic evidence for a close relationship between the dimorphic prosthecate bacteria Hyphomonas neptunium and Caulobacter crescentus.</title>
        <authorList>
            <person name="Badger J.H."/>
            <person name="Hoover T.R."/>
            <person name="Brun Y.V."/>
            <person name="Weiner R.M."/>
            <person name="Laub M.T."/>
            <person name="Alexandre G."/>
            <person name="Mrazek J."/>
            <person name="Ren Q."/>
            <person name="Paulsen I.T."/>
            <person name="Nelson K.E."/>
            <person name="Khouri H.M."/>
            <person name="Radune D."/>
            <person name="Sosa J."/>
            <person name="Dodson R.J."/>
            <person name="Sullivan S.A."/>
            <person name="Rosovitz M.J."/>
            <person name="Madupu R."/>
            <person name="Brinkac L.M."/>
            <person name="Durkin A.S."/>
            <person name="Daugherty S.C."/>
            <person name="Kothari S.P."/>
            <person name="Giglio M.G."/>
            <person name="Zhou L."/>
            <person name="Haft D.H."/>
            <person name="Selengut J.D."/>
            <person name="Davidsen T.M."/>
            <person name="Yang Q."/>
            <person name="Zafar N."/>
            <person name="Ward N.L."/>
        </authorList>
    </citation>
    <scope>NUCLEOTIDE SEQUENCE [LARGE SCALE GENOMIC DNA]</scope>
    <source>
        <strain>ATCC 15444</strain>
    </source>
</reference>
<protein>
    <recommendedName>
        <fullName evidence="1">Ribosomal RNA small subunit methyltransferase H</fullName>
        <ecNumber evidence="1">2.1.1.199</ecNumber>
    </recommendedName>
    <alternativeName>
        <fullName evidence="1">16S rRNA m(4)C1402 methyltransferase</fullName>
    </alternativeName>
    <alternativeName>
        <fullName evidence="1">rRNA (cytosine-N(4)-)-methyltransferase RsmH</fullName>
    </alternativeName>
</protein>
<comment type="function">
    <text evidence="1">Specifically methylates the N4 position of cytidine in position 1402 (C1402) of 16S rRNA.</text>
</comment>
<comment type="catalytic activity">
    <reaction evidence="1">
        <text>cytidine(1402) in 16S rRNA + S-adenosyl-L-methionine = N(4)-methylcytidine(1402) in 16S rRNA + S-adenosyl-L-homocysteine + H(+)</text>
        <dbReference type="Rhea" id="RHEA:42928"/>
        <dbReference type="Rhea" id="RHEA-COMP:10286"/>
        <dbReference type="Rhea" id="RHEA-COMP:10287"/>
        <dbReference type="ChEBI" id="CHEBI:15378"/>
        <dbReference type="ChEBI" id="CHEBI:57856"/>
        <dbReference type="ChEBI" id="CHEBI:59789"/>
        <dbReference type="ChEBI" id="CHEBI:74506"/>
        <dbReference type="ChEBI" id="CHEBI:82748"/>
        <dbReference type="EC" id="2.1.1.199"/>
    </reaction>
</comment>
<comment type="subcellular location">
    <subcellularLocation>
        <location evidence="1">Cytoplasm</location>
    </subcellularLocation>
</comment>
<comment type="similarity">
    <text evidence="1">Belongs to the methyltransferase superfamily. RsmH family.</text>
</comment>
<proteinExistence type="inferred from homology"/>
<name>RSMH_HYPNA</name>
<organism>
    <name type="scientific">Hyphomonas neptunium (strain ATCC 15444)</name>
    <dbReference type="NCBI Taxonomy" id="228405"/>
    <lineage>
        <taxon>Bacteria</taxon>
        <taxon>Pseudomonadati</taxon>
        <taxon>Pseudomonadota</taxon>
        <taxon>Alphaproteobacteria</taxon>
        <taxon>Hyphomonadales</taxon>
        <taxon>Hyphomonadaceae</taxon>
        <taxon>Hyphomonas</taxon>
    </lineage>
</organism>
<sequence length="342" mass="36518">MSLRTTPRSPAEPGHLPVMLAEVLTALAPADGEVIVDGTFGGGGYTTAILKAANCTVLGIDRDLDAIVRAEKMAQANPRLVPLLGCFGDLDTLAEQAGHASVDGVVLDIGVSSFQIDQADRGFSFMKDGPLDMRMGGSGPSAADVVNTMSEKGLADVIFRLGEEKNSRRIARVLVQRRVQAPFETTADLAAVVEEAVGGRRGARSHPATLTFQAIRMYVNDELGELARGLRAAERILKPGGRLVVVTFHSLEDRLVKQWLRERAGAVPGGSRHMPLMSKGPAPAFELQENKAVQPSEKEVETNPRARSAKLRAAIRTNADAALDEASDGMNLPPLAELEKSR</sequence>
<accession>Q0BXT4</accession>
<keyword id="KW-0963">Cytoplasm</keyword>
<keyword id="KW-0489">Methyltransferase</keyword>
<keyword id="KW-1185">Reference proteome</keyword>
<keyword id="KW-0698">rRNA processing</keyword>
<keyword id="KW-0949">S-adenosyl-L-methionine</keyword>
<keyword id="KW-0808">Transferase</keyword>
<dbReference type="EC" id="2.1.1.199" evidence="1"/>
<dbReference type="EMBL" id="CP000158">
    <property type="protein sequence ID" value="ABI78016.1"/>
    <property type="molecule type" value="Genomic_DNA"/>
</dbReference>
<dbReference type="RefSeq" id="WP_011648006.1">
    <property type="nucleotide sequence ID" value="NC_008358.1"/>
</dbReference>
<dbReference type="SMR" id="Q0BXT4"/>
<dbReference type="STRING" id="228405.HNE_3032"/>
<dbReference type="KEGG" id="hne:HNE_3032"/>
<dbReference type="eggNOG" id="COG0275">
    <property type="taxonomic scope" value="Bacteria"/>
</dbReference>
<dbReference type="HOGENOM" id="CLU_038422_1_1_5"/>
<dbReference type="Proteomes" id="UP000001959">
    <property type="component" value="Chromosome"/>
</dbReference>
<dbReference type="GO" id="GO:0005737">
    <property type="term" value="C:cytoplasm"/>
    <property type="evidence" value="ECO:0007669"/>
    <property type="project" value="UniProtKB-SubCell"/>
</dbReference>
<dbReference type="GO" id="GO:0071424">
    <property type="term" value="F:rRNA (cytosine-N4-)-methyltransferase activity"/>
    <property type="evidence" value="ECO:0007669"/>
    <property type="project" value="UniProtKB-UniRule"/>
</dbReference>
<dbReference type="GO" id="GO:0070475">
    <property type="term" value="P:rRNA base methylation"/>
    <property type="evidence" value="ECO:0007669"/>
    <property type="project" value="UniProtKB-UniRule"/>
</dbReference>
<dbReference type="Gene3D" id="1.10.150.170">
    <property type="entry name" value="Putative methyltransferase TM0872, insert domain"/>
    <property type="match status" value="1"/>
</dbReference>
<dbReference type="Gene3D" id="3.40.50.150">
    <property type="entry name" value="Vaccinia Virus protein VP39"/>
    <property type="match status" value="1"/>
</dbReference>
<dbReference type="HAMAP" id="MF_01007">
    <property type="entry name" value="16SrRNA_methyltr_H"/>
    <property type="match status" value="1"/>
</dbReference>
<dbReference type="InterPro" id="IPR002903">
    <property type="entry name" value="RsmH"/>
</dbReference>
<dbReference type="InterPro" id="IPR023397">
    <property type="entry name" value="SAM-dep_MeTrfase_MraW_recog"/>
</dbReference>
<dbReference type="InterPro" id="IPR029063">
    <property type="entry name" value="SAM-dependent_MTases_sf"/>
</dbReference>
<dbReference type="NCBIfam" id="TIGR00006">
    <property type="entry name" value="16S rRNA (cytosine(1402)-N(4))-methyltransferase RsmH"/>
    <property type="match status" value="1"/>
</dbReference>
<dbReference type="PANTHER" id="PTHR11265:SF0">
    <property type="entry name" value="12S RRNA N4-METHYLCYTIDINE METHYLTRANSFERASE"/>
    <property type="match status" value="1"/>
</dbReference>
<dbReference type="PANTHER" id="PTHR11265">
    <property type="entry name" value="S-ADENOSYL-METHYLTRANSFERASE MRAW"/>
    <property type="match status" value="1"/>
</dbReference>
<dbReference type="Pfam" id="PF01795">
    <property type="entry name" value="Methyltransf_5"/>
    <property type="match status" value="1"/>
</dbReference>
<dbReference type="PIRSF" id="PIRSF004486">
    <property type="entry name" value="MraW"/>
    <property type="match status" value="1"/>
</dbReference>
<dbReference type="SUPFAM" id="SSF81799">
    <property type="entry name" value="Putative methyltransferase TM0872, insert domain"/>
    <property type="match status" value="1"/>
</dbReference>
<dbReference type="SUPFAM" id="SSF53335">
    <property type="entry name" value="S-adenosyl-L-methionine-dependent methyltransferases"/>
    <property type="match status" value="1"/>
</dbReference>
<gene>
    <name evidence="1" type="primary">rsmH</name>
    <name type="synonym">mraW</name>
    <name type="ordered locus">HNE_3032</name>
</gene>